<evidence type="ECO:0000255" key="1"/>
<evidence type="ECO:0000269" key="2">
    <source>
    </source>
</evidence>
<evidence type="ECO:0000305" key="3"/>
<evidence type="ECO:0000305" key="4">
    <source>
    </source>
</evidence>
<proteinExistence type="uncertain"/>
<dbReference type="EMBL" id="X97751">
    <property type="protein sequence ID" value="CAA66341.1"/>
    <property type="molecule type" value="Genomic_DNA"/>
</dbReference>
<dbReference type="EMBL" id="Z74199">
    <property type="protein sequence ID" value="CAA98724.1"/>
    <property type="molecule type" value="Genomic_DNA"/>
</dbReference>
<dbReference type="PIR" id="S67699">
    <property type="entry name" value="S67699"/>
</dbReference>
<dbReference type="MINT" id="Q12064"/>
<dbReference type="STRING" id="4932.YDL151C"/>
<dbReference type="PaxDb" id="4932-YDL151C"/>
<dbReference type="EnsemblFungi" id="YDL151C_mRNA">
    <property type="protein sequence ID" value="YDL151C"/>
    <property type="gene ID" value="YDL151C"/>
</dbReference>
<dbReference type="AGR" id="SGD:S000002310"/>
<dbReference type="SGD" id="S000002310">
    <property type="gene designation" value="BUD30"/>
</dbReference>
<dbReference type="HOGENOM" id="CLU_1409819_0_0_1"/>
<dbReference type="GO" id="GO:0030437">
    <property type="term" value="P:ascospore formation"/>
    <property type="evidence" value="ECO:0007001"/>
    <property type="project" value="SGD"/>
</dbReference>
<comment type="disruption phenotype">
    <text evidence="2">Diploid deletion displays a weak budding pattern phenotype in a systematic assay.</text>
</comment>
<comment type="miscellaneous">
    <text evidence="3">Almost completely overlaps RPC53. Disruption phenotypes caused by deletion of this gene may also be a result of a defect in its overlapping gene.</text>
</comment>
<comment type="caution">
    <text evidence="4">Product of a dubious gene prediction unlikely to encode a functional protein. Because of that it is not part of the S.cerevisiae S288c complete/reference proteome set.</text>
</comment>
<keyword id="KW-0732">Signal</keyword>
<protein>
    <recommendedName>
        <fullName>Putative uncharacterized protein BUD30</fullName>
    </recommendedName>
</protein>
<feature type="signal peptide" evidence="1">
    <location>
        <begin position="1"/>
        <end position="14"/>
    </location>
</feature>
<feature type="chain" id="PRO_0000299773" description="Putative uncharacterized protein BUD30">
    <location>
        <begin position="15"/>
        <end position="193"/>
    </location>
</feature>
<accession>Q12064</accession>
<name>BUD30_YEAST</name>
<reference key="1">
    <citation type="journal article" date="1996" name="Yeast">
        <title>Analysis of a 23 kb region on the left arm of yeast chromosome IV.</title>
        <authorList>
            <person name="Delaveau T.T.D."/>
            <person name="Blugeon C."/>
            <person name="Jacq C."/>
            <person name="Perea J."/>
        </authorList>
    </citation>
    <scope>NUCLEOTIDE SEQUENCE [GENOMIC DNA]</scope>
</reference>
<reference key="2">
    <citation type="journal article" date="1997" name="Nature">
        <title>The nucleotide sequence of Saccharomyces cerevisiae chromosome IV.</title>
        <authorList>
            <person name="Jacq C."/>
            <person name="Alt-Moerbe J."/>
            <person name="Andre B."/>
            <person name="Arnold W."/>
            <person name="Bahr A."/>
            <person name="Ballesta J.P.G."/>
            <person name="Bargues M."/>
            <person name="Baron L."/>
            <person name="Becker A."/>
            <person name="Biteau N."/>
            <person name="Bloecker H."/>
            <person name="Blugeon C."/>
            <person name="Boskovic J."/>
            <person name="Brandt P."/>
            <person name="Brueckner M."/>
            <person name="Buitrago M.J."/>
            <person name="Coster F."/>
            <person name="Delaveau T."/>
            <person name="del Rey F."/>
            <person name="Dujon B."/>
            <person name="Eide L.G."/>
            <person name="Garcia-Cantalejo J.M."/>
            <person name="Goffeau A."/>
            <person name="Gomez-Peris A."/>
            <person name="Granotier C."/>
            <person name="Hanemann V."/>
            <person name="Hankeln T."/>
            <person name="Hoheisel J.D."/>
            <person name="Jaeger W."/>
            <person name="Jimenez A."/>
            <person name="Jonniaux J.-L."/>
            <person name="Kraemer C."/>
            <person name="Kuester H."/>
            <person name="Laamanen P."/>
            <person name="Legros Y."/>
            <person name="Louis E.J."/>
            <person name="Moeller-Rieker S."/>
            <person name="Monnet A."/>
            <person name="Moro M."/>
            <person name="Mueller-Auer S."/>
            <person name="Nussbaumer B."/>
            <person name="Paricio N."/>
            <person name="Paulin L."/>
            <person name="Perea J."/>
            <person name="Perez-Alonso M."/>
            <person name="Perez-Ortin J.E."/>
            <person name="Pohl T.M."/>
            <person name="Prydz H."/>
            <person name="Purnelle B."/>
            <person name="Rasmussen S.W."/>
            <person name="Remacha M.A."/>
            <person name="Revuelta J.L."/>
            <person name="Rieger M."/>
            <person name="Salom D."/>
            <person name="Saluz H.P."/>
            <person name="Saiz J.E."/>
            <person name="Saren A.-M."/>
            <person name="Schaefer M."/>
            <person name="Scharfe M."/>
            <person name="Schmidt E.R."/>
            <person name="Schneider C."/>
            <person name="Scholler P."/>
            <person name="Schwarz S."/>
            <person name="Soler-Mira A."/>
            <person name="Urrestarazu L.A."/>
            <person name="Verhasselt P."/>
            <person name="Vissers S."/>
            <person name="Voet M."/>
            <person name="Volckaert G."/>
            <person name="Wagner G."/>
            <person name="Wambutt R."/>
            <person name="Wedler E."/>
            <person name="Wedler H."/>
            <person name="Woelfl S."/>
            <person name="Harris D.E."/>
            <person name="Bowman S."/>
            <person name="Brown D."/>
            <person name="Churcher C.M."/>
            <person name="Connor R."/>
            <person name="Dedman K."/>
            <person name="Gentles S."/>
            <person name="Hamlin N."/>
            <person name="Hunt S."/>
            <person name="Jones L."/>
            <person name="McDonald S."/>
            <person name="Murphy L.D."/>
            <person name="Niblett D."/>
            <person name="Odell C."/>
            <person name="Oliver K."/>
            <person name="Rajandream M.A."/>
            <person name="Richards C."/>
            <person name="Shore L."/>
            <person name="Walsh S.V."/>
            <person name="Barrell B.G."/>
            <person name="Dietrich F.S."/>
            <person name="Mulligan J.T."/>
            <person name="Allen E."/>
            <person name="Araujo R."/>
            <person name="Aviles E."/>
            <person name="Berno A."/>
            <person name="Carpenter J."/>
            <person name="Chen E."/>
            <person name="Cherry J.M."/>
            <person name="Chung E."/>
            <person name="Duncan M."/>
            <person name="Hunicke-Smith S."/>
            <person name="Hyman R.W."/>
            <person name="Komp C."/>
            <person name="Lashkari D."/>
            <person name="Lew H."/>
            <person name="Lin D."/>
            <person name="Mosedale D."/>
            <person name="Nakahara K."/>
            <person name="Namath A."/>
            <person name="Oefner P."/>
            <person name="Oh C."/>
            <person name="Petel F.X."/>
            <person name="Roberts D."/>
            <person name="Schramm S."/>
            <person name="Schroeder M."/>
            <person name="Shogren T."/>
            <person name="Shroff N."/>
            <person name="Winant A."/>
            <person name="Yelton M.A."/>
            <person name="Botstein D."/>
            <person name="Davis R.W."/>
            <person name="Johnston M."/>
            <person name="Andrews S."/>
            <person name="Brinkman R."/>
            <person name="Cooper J."/>
            <person name="Ding H."/>
            <person name="Du Z."/>
            <person name="Favello A."/>
            <person name="Fulton L."/>
            <person name="Gattung S."/>
            <person name="Greco T."/>
            <person name="Hallsworth K."/>
            <person name="Hawkins J."/>
            <person name="Hillier L.W."/>
            <person name="Jier M."/>
            <person name="Johnson D."/>
            <person name="Johnston L."/>
            <person name="Kirsten J."/>
            <person name="Kucaba T."/>
            <person name="Langston Y."/>
            <person name="Latreille P."/>
            <person name="Le T."/>
            <person name="Mardis E."/>
            <person name="Menezes S."/>
            <person name="Miller N."/>
            <person name="Nhan M."/>
            <person name="Pauley A."/>
            <person name="Peluso D."/>
            <person name="Rifkin L."/>
            <person name="Riles L."/>
            <person name="Taich A."/>
            <person name="Trevaskis E."/>
            <person name="Vignati D."/>
            <person name="Wilcox L."/>
            <person name="Wohldman P."/>
            <person name="Vaudin M."/>
            <person name="Wilson R."/>
            <person name="Waterston R."/>
            <person name="Albermann K."/>
            <person name="Hani J."/>
            <person name="Heumann K."/>
            <person name="Kleine K."/>
            <person name="Mewes H.-W."/>
            <person name="Zollner A."/>
            <person name="Zaccaria P."/>
        </authorList>
    </citation>
    <scope>NUCLEOTIDE SEQUENCE [LARGE SCALE GENOMIC DNA]</scope>
    <source>
        <strain>ATCC 204508 / S288c</strain>
    </source>
</reference>
<reference key="3">
    <citation type="journal article" date="2014" name="G3 (Bethesda)">
        <title>The reference genome sequence of Saccharomyces cerevisiae: Then and now.</title>
        <authorList>
            <person name="Engel S.R."/>
            <person name="Dietrich F.S."/>
            <person name="Fisk D.G."/>
            <person name="Binkley G."/>
            <person name="Balakrishnan R."/>
            <person name="Costanzo M.C."/>
            <person name="Dwight S.S."/>
            <person name="Hitz B.C."/>
            <person name="Karra K."/>
            <person name="Nash R.S."/>
            <person name="Weng S."/>
            <person name="Wong E.D."/>
            <person name="Lloyd P."/>
            <person name="Skrzypek M.S."/>
            <person name="Miyasato S.R."/>
            <person name="Simison M."/>
            <person name="Cherry J.M."/>
        </authorList>
    </citation>
    <scope>GENOME REANNOTATION</scope>
    <source>
        <strain>ATCC 204508 / S288c</strain>
    </source>
</reference>
<reference key="4">
    <citation type="journal article" date="2001" name="Mol. Biol. Cell">
        <title>A genomic study of the bipolar bud site selection pattern in Saccharomyces cerevisiae.</title>
        <authorList>
            <person name="Ni L."/>
            <person name="Snyder M."/>
        </authorList>
    </citation>
    <scope>DISRUPTION PHENOTYPE</scope>
</reference>
<gene>
    <name type="primary">BUD30</name>
    <name type="ordered locus">YDL151C</name>
</gene>
<organism>
    <name type="scientific">Saccharomyces cerevisiae (strain ATCC 204508 / S288c)</name>
    <name type="common">Baker's yeast</name>
    <dbReference type="NCBI Taxonomy" id="559292"/>
    <lineage>
        <taxon>Eukaryota</taxon>
        <taxon>Fungi</taxon>
        <taxon>Dikarya</taxon>
        <taxon>Ascomycota</taxon>
        <taxon>Saccharomycotina</taxon>
        <taxon>Saccharomycetes</taxon>
        <taxon>Saccharomycetales</taxon>
        <taxon>Saccharomycetaceae</taxon>
        <taxon>Saccharomyces</taxon>
    </lineage>
</organism>
<sequence>MSTSLLFSLSPSSSSSMRLRASNSFPILNFFLDLDATPSLSSSSASFSELSAPLSIVSRPFCTRDDPLPSDLMNPLLKSPFSLTKFPAANGPLEITCVLFKYLAIRLCWPPAPVTLLFLLLKCFLSLPLLDSSSSFTLDAAASLSSLDFLATAFGLNFNEGLADPPPLEEESFNDGKRPFPLLLLILNECYPA</sequence>